<reference key="1">
    <citation type="submission" date="2008-06" db="EMBL/GenBank/DDBJ databases">
        <title>Genome and proteome analysis of A. pleuropneumoniae serotype 7.</title>
        <authorList>
            <person name="Linke B."/>
            <person name="Buettner F."/>
            <person name="Martinez-Arias R."/>
            <person name="Goesmann A."/>
            <person name="Baltes N."/>
            <person name="Tegetmeyer H."/>
            <person name="Singh M."/>
            <person name="Gerlach G.F."/>
        </authorList>
    </citation>
    <scope>NUCLEOTIDE SEQUENCE [LARGE SCALE GENOMIC DNA]</scope>
    <source>
        <strain>AP76</strain>
    </source>
</reference>
<gene>
    <name evidence="1" type="primary">selA</name>
    <name type="ordered locus">APP7_1624</name>
</gene>
<protein>
    <recommendedName>
        <fullName evidence="1">L-seryl-tRNA(Sec) selenium transferase</fullName>
        <ecNumber evidence="1">2.9.1.1</ecNumber>
    </recommendedName>
    <alternativeName>
        <fullName evidence="1">Selenocysteine synthase</fullName>
        <shortName evidence="1">Sec synthase</shortName>
    </alternativeName>
    <alternativeName>
        <fullName evidence="1">Selenocysteinyl-tRNA(Sec) synthase</fullName>
    </alternativeName>
</protein>
<accession>B3GYP5</accession>
<evidence type="ECO:0000255" key="1">
    <source>
        <dbReference type="HAMAP-Rule" id="MF_00423"/>
    </source>
</evidence>
<proteinExistence type="inferred from homology"/>
<comment type="function">
    <text evidence="1">Converts seryl-tRNA(Sec) to selenocysteinyl-tRNA(Sec) required for selenoprotein biosynthesis.</text>
</comment>
<comment type="catalytic activity">
    <reaction evidence="1">
        <text>L-seryl-tRNA(Sec) + selenophosphate + H(+) = L-selenocysteinyl-tRNA(Sec) + phosphate</text>
        <dbReference type="Rhea" id="RHEA:22728"/>
        <dbReference type="Rhea" id="RHEA-COMP:9742"/>
        <dbReference type="Rhea" id="RHEA-COMP:9743"/>
        <dbReference type="ChEBI" id="CHEBI:15378"/>
        <dbReference type="ChEBI" id="CHEBI:16144"/>
        <dbReference type="ChEBI" id="CHEBI:43474"/>
        <dbReference type="ChEBI" id="CHEBI:78533"/>
        <dbReference type="ChEBI" id="CHEBI:78573"/>
        <dbReference type="EC" id="2.9.1.1"/>
    </reaction>
</comment>
<comment type="cofactor">
    <cofactor evidence="1">
        <name>pyridoxal 5'-phosphate</name>
        <dbReference type="ChEBI" id="CHEBI:597326"/>
    </cofactor>
</comment>
<comment type="pathway">
    <text evidence="1">Aminoacyl-tRNA biosynthesis; selenocysteinyl-tRNA(Sec) biosynthesis; selenocysteinyl-tRNA(Sec) from L-seryl-tRNA(Sec) (bacterial route): step 1/1.</text>
</comment>
<comment type="subcellular location">
    <subcellularLocation>
        <location evidence="1">Cytoplasm</location>
    </subcellularLocation>
</comment>
<comment type="similarity">
    <text evidence="1">Belongs to the SelA family.</text>
</comment>
<name>SELA_ACTP7</name>
<sequence length="461" mass="50976">MQKLFRAIPAIDKLIKSPQGVDLIERFGHQAFVQEARALIENAREQIIKQQCLPAFMNEQSAIFSLIEQNLQKKRMVSSKTVFNLTGTVLHTNLGRGLWSENAITAATNAMRNNVALEFDIDEGKRSHRDIYISQLIQQLTGAEAACVVNNNAAAVLLMLATFAQGKEVIVSRGELVEIGGAFRIPDIMAQAGCKLVEVGTTNRTHLWDYRNAINENTAFLMKVHTSNYHVQGFTKSVSEEELVELAKEFDLPVISDLGSGSLTDMAVLGLPAEPMVQQKVAAGVDLVSFSCDKLLGGPQAGIIVGKKVLIDALQSHPLKRVLRCDKVILSALEATLRHYLFPEKLTDEVPTFQLLTQSIETLQNKAERLKAVLNKRLDSRYILQVEPSLAQIGSGSLPTETLASVAVTVFAEKQSDLLELEKRFKALPSPIIGRFAQQKFWLDVRSAAQFEQLLNMLEEA</sequence>
<dbReference type="EC" id="2.9.1.1" evidence="1"/>
<dbReference type="EMBL" id="CP001091">
    <property type="protein sequence ID" value="ACE62276.1"/>
    <property type="molecule type" value="Genomic_DNA"/>
</dbReference>
<dbReference type="RefSeq" id="WP_005618040.1">
    <property type="nucleotide sequence ID" value="NC_010939.1"/>
</dbReference>
<dbReference type="SMR" id="B3GYP5"/>
<dbReference type="KEGG" id="apa:APP7_1624"/>
<dbReference type="HOGENOM" id="CLU_038142_1_0_6"/>
<dbReference type="UniPathway" id="UPA00906">
    <property type="reaction ID" value="UER00896"/>
</dbReference>
<dbReference type="Proteomes" id="UP000001226">
    <property type="component" value="Chromosome"/>
</dbReference>
<dbReference type="GO" id="GO:0005737">
    <property type="term" value="C:cytoplasm"/>
    <property type="evidence" value="ECO:0007669"/>
    <property type="project" value="UniProtKB-SubCell"/>
</dbReference>
<dbReference type="GO" id="GO:0004125">
    <property type="term" value="F:L-seryl-tRNA(Sec) selenium transferase activity"/>
    <property type="evidence" value="ECO:0007669"/>
    <property type="project" value="UniProtKB-UniRule"/>
</dbReference>
<dbReference type="GO" id="GO:0001717">
    <property type="term" value="P:conversion of seryl-tRNAsec to selenocys-tRNAsec"/>
    <property type="evidence" value="ECO:0007669"/>
    <property type="project" value="UniProtKB-UniRule"/>
</dbReference>
<dbReference type="GO" id="GO:0001514">
    <property type="term" value="P:selenocysteine incorporation"/>
    <property type="evidence" value="ECO:0007669"/>
    <property type="project" value="UniProtKB-UniRule"/>
</dbReference>
<dbReference type="FunFam" id="3.40.640.10:FF:000028">
    <property type="entry name" value="L-seryl-tRNA(Sec) selenium transferase"/>
    <property type="match status" value="1"/>
</dbReference>
<dbReference type="Gene3D" id="3.90.1150.180">
    <property type="match status" value="1"/>
</dbReference>
<dbReference type="Gene3D" id="3.40.640.10">
    <property type="entry name" value="Type I PLP-dependent aspartate aminotransferase-like (Major domain)"/>
    <property type="match status" value="1"/>
</dbReference>
<dbReference type="HAMAP" id="MF_00423">
    <property type="entry name" value="SelA"/>
    <property type="match status" value="1"/>
</dbReference>
<dbReference type="InterPro" id="IPR015424">
    <property type="entry name" value="PyrdxlP-dep_Trfase"/>
</dbReference>
<dbReference type="InterPro" id="IPR015421">
    <property type="entry name" value="PyrdxlP-dep_Trfase_major"/>
</dbReference>
<dbReference type="InterPro" id="IPR018319">
    <property type="entry name" value="SelA-like"/>
</dbReference>
<dbReference type="InterPro" id="IPR004534">
    <property type="entry name" value="SelA_trans"/>
</dbReference>
<dbReference type="InterPro" id="IPR025862">
    <property type="entry name" value="SelA_trans_N_dom"/>
</dbReference>
<dbReference type="NCBIfam" id="TIGR00474">
    <property type="entry name" value="selA"/>
    <property type="match status" value="1"/>
</dbReference>
<dbReference type="PANTHER" id="PTHR32328">
    <property type="entry name" value="L-SERYL-TRNA(SEC) SELENIUM TRANSFERASE"/>
    <property type="match status" value="1"/>
</dbReference>
<dbReference type="PANTHER" id="PTHR32328:SF0">
    <property type="entry name" value="L-SERYL-TRNA(SEC) SELENIUM TRANSFERASE"/>
    <property type="match status" value="1"/>
</dbReference>
<dbReference type="Pfam" id="PF12390">
    <property type="entry name" value="Se-cys_synth_N"/>
    <property type="match status" value="1"/>
</dbReference>
<dbReference type="Pfam" id="PF03841">
    <property type="entry name" value="SelA"/>
    <property type="match status" value="1"/>
</dbReference>
<dbReference type="SUPFAM" id="SSF53383">
    <property type="entry name" value="PLP-dependent transferases"/>
    <property type="match status" value="1"/>
</dbReference>
<feature type="chain" id="PRO_1000124133" description="L-seryl-tRNA(Sec) selenium transferase">
    <location>
        <begin position="1"/>
        <end position="461"/>
    </location>
</feature>
<feature type="modified residue" description="N6-(pyridoxal phosphate)lysine" evidence="1">
    <location>
        <position position="294"/>
    </location>
</feature>
<organism>
    <name type="scientific">Actinobacillus pleuropneumoniae serotype 7 (strain AP76)</name>
    <dbReference type="NCBI Taxonomy" id="537457"/>
    <lineage>
        <taxon>Bacteria</taxon>
        <taxon>Pseudomonadati</taxon>
        <taxon>Pseudomonadota</taxon>
        <taxon>Gammaproteobacteria</taxon>
        <taxon>Pasteurellales</taxon>
        <taxon>Pasteurellaceae</taxon>
        <taxon>Actinobacillus</taxon>
    </lineage>
</organism>
<keyword id="KW-0963">Cytoplasm</keyword>
<keyword id="KW-0648">Protein biosynthesis</keyword>
<keyword id="KW-0663">Pyridoxal phosphate</keyword>
<keyword id="KW-0711">Selenium</keyword>
<keyword id="KW-0808">Transferase</keyword>